<proteinExistence type="inferred from homology"/>
<protein>
    <recommendedName>
        <fullName evidence="1">Glucosamine-6-phosphate deaminase</fullName>
        <ecNumber evidence="1">3.5.99.6</ecNumber>
    </recommendedName>
    <alternativeName>
        <fullName evidence="1">GlcN6P deaminase</fullName>
        <shortName evidence="1">GNPDA</shortName>
    </alternativeName>
    <alternativeName>
        <fullName evidence="1">Glucosamine-6-phosphate isomerase</fullName>
    </alternativeName>
</protein>
<organism>
    <name type="scientific">Staphylococcus aureus (strain MW2)</name>
    <dbReference type="NCBI Taxonomy" id="196620"/>
    <lineage>
        <taxon>Bacteria</taxon>
        <taxon>Bacillati</taxon>
        <taxon>Bacillota</taxon>
        <taxon>Bacilli</taxon>
        <taxon>Bacillales</taxon>
        <taxon>Staphylococcaceae</taxon>
        <taxon>Staphylococcus</taxon>
    </lineage>
</organism>
<evidence type="ECO:0000255" key="1">
    <source>
        <dbReference type="HAMAP-Rule" id="MF_01241"/>
    </source>
</evidence>
<feature type="chain" id="PRO_0000160167" description="Glucosamine-6-phosphate deaminase">
    <location>
        <begin position="1"/>
        <end position="252"/>
    </location>
</feature>
<feature type="active site" description="Proton acceptor; for enolization step" evidence="1">
    <location>
        <position position="67"/>
    </location>
</feature>
<feature type="active site" description="For ring-opening step" evidence="1">
    <location>
        <position position="137"/>
    </location>
</feature>
<feature type="active site" description="Proton acceptor; for ring-opening step" evidence="1">
    <location>
        <position position="139"/>
    </location>
</feature>
<feature type="active site" description="For ring-opening step" evidence="1">
    <location>
        <position position="144"/>
    </location>
</feature>
<reference key="1">
    <citation type="journal article" date="2002" name="Lancet">
        <title>Genome and virulence determinants of high virulence community-acquired MRSA.</title>
        <authorList>
            <person name="Baba T."/>
            <person name="Takeuchi F."/>
            <person name="Kuroda M."/>
            <person name="Yuzawa H."/>
            <person name="Aoki K."/>
            <person name="Oguchi A."/>
            <person name="Nagai Y."/>
            <person name="Iwama N."/>
            <person name="Asano K."/>
            <person name="Naimi T."/>
            <person name="Kuroda H."/>
            <person name="Cui L."/>
            <person name="Yamamoto K."/>
            <person name="Hiramatsu K."/>
        </authorList>
    </citation>
    <scope>NUCLEOTIDE SEQUENCE [LARGE SCALE GENOMIC DNA]</scope>
    <source>
        <strain>MW2</strain>
    </source>
</reference>
<name>NAGB_STAAW</name>
<gene>
    <name evidence="1" type="primary">nagB</name>
    <name type="ordered locus">MW0524</name>
</gene>
<keyword id="KW-0119">Carbohydrate metabolism</keyword>
<keyword id="KW-0378">Hydrolase</keyword>
<sequence length="252" mass="28467">MKVLNLGSKKQASFYVACELYKEMAFNQHCKLGLATGGTMTDLYEQLVKLLNKNQLNVDNVSTFNLDEYVGLTASHPQSYHYYMDDMLFKQYPYFNRKNIHIPNGDADDMNAEASKYNDVLEQQGQRDIQILGIGENGHIGFNEPGTPFDSVTHIVDLTESTIKANSRYFKNEDDVPKQAISMGLANILQAKRIILLAFGEKKRAAITHLLNQEISVDVPATLLHKHPNVEIYLDDEACPKNVAKIHVDEMD</sequence>
<comment type="function">
    <text evidence="1">Catalyzes the reversible isomerization-deamination of glucosamine 6-phosphate (GlcN6P) to form fructose 6-phosphate (Fru6P) and ammonium ion.</text>
</comment>
<comment type="catalytic activity">
    <reaction evidence="1">
        <text>alpha-D-glucosamine 6-phosphate + H2O = beta-D-fructose 6-phosphate + NH4(+)</text>
        <dbReference type="Rhea" id="RHEA:12172"/>
        <dbReference type="ChEBI" id="CHEBI:15377"/>
        <dbReference type="ChEBI" id="CHEBI:28938"/>
        <dbReference type="ChEBI" id="CHEBI:57634"/>
        <dbReference type="ChEBI" id="CHEBI:75989"/>
        <dbReference type="EC" id="3.5.99.6"/>
    </reaction>
</comment>
<comment type="pathway">
    <text evidence="1">Amino-sugar metabolism; N-acetylneuraminate degradation; D-fructose 6-phosphate from N-acetylneuraminate: step 5/5.</text>
</comment>
<comment type="similarity">
    <text evidence="1">Belongs to the glucosamine/galactosamine-6-phosphate isomerase family. NagB subfamily.</text>
</comment>
<dbReference type="EC" id="3.5.99.6" evidence="1"/>
<dbReference type="EMBL" id="BA000033">
    <property type="protein sequence ID" value="BAB94389.1"/>
    <property type="molecule type" value="Genomic_DNA"/>
</dbReference>
<dbReference type="RefSeq" id="WP_000866415.1">
    <property type="nucleotide sequence ID" value="NC_003923.1"/>
</dbReference>
<dbReference type="SMR" id="P65513"/>
<dbReference type="KEGG" id="sam:MW0524"/>
<dbReference type="HOGENOM" id="CLU_049611_1_1_9"/>
<dbReference type="UniPathway" id="UPA00629">
    <property type="reaction ID" value="UER00684"/>
</dbReference>
<dbReference type="GO" id="GO:0005737">
    <property type="term" value="C:cytoplasm"/>
    <property type="evidence" value="ECO:0007669"/>
    <property type="project" value="TreeGrafter"/>
</dbReference>
<dbReference type="GO" id="GO:0004342">
    <property type="term" value="F:glucosamine-6-phosphate deaminase activity"/>
    <property type="evidence" value="ECO:0007669"/>
    <property type="project" value="UniProtKB-UniRule"/>
</dbReference>
<dbReference type="GO" id="GO:0042802">
    <property type="term" value="F:identical protein binding"/>
    <property type="evidence" value="ECO:0007669"/>
    <property type="project" value="TreeGrafter"/>
</dbReference>
<dbReference type="GO" id="GO:0005975">
    <property type="term" value="P:carbohydrate metabolic process"/>
    <property type="evidence" value="ECO:0007669"/>
    <property type="project" value="InterPro"/>
</dbReference>
<dbReference type="GO" id="GO:0006043">
    <property type="term" value="P:glucosamine catabolic process"/>
    <property type="evidence" value="ECO:0007669"/>
    <property type="project" value="TreeGrafter"/>
</dbReference>
<dbReference type="GO" id="GO:0006046">
    <property type="term" value="P:N-acetylglucosamine catabolic process"/>
    <property type="evidence" value="ECO:0007669"/>
    <property type="project" value="TreeGrafter"/>
</dbReference>
<dbReference type="GO" id="GO:0019262">
    <property type="term" value="P:N-acetylneuraminate catabolic process"/>
    <property type="evidence" value="ECO:0007669"/>
    <property type="project" value="UniProtKB-UniRule"/>
</dbReference>
<dbReference type="CDD" id="cd01399">
    <property type="entry name" value="GlcN6P_deaminase"/>
    <property type="match status" value="1"/>
</dbReference>
<dbReference type="FunFam" id="3.40.50.1360:FF:000003">
    <property type="entry name" value="Glucosamine-6-phosphate deaminase"/>
    <property type="match status" value="1"/>
</dbReference>
<dbReference type="Gene3D" id="3.40.50.1360">
    <property type="match status" value="1"/>
</dbReference>
<dbReference type="HAMAP" id="MF_01241">
    <property type="entry name" value="GlcN6P_deamin"/>
    <property type="match status" value="1"/>
</dbReference>
<dbReference type="InterPro" id="IPR006148">
    <property type="entry name" value="Glc/Gal-6P_isomerase"/>
</dbReference>
<dbReference type="InterPro" id="IPR004547">
    <property type="entry name" value="Glucosamine6P_isomerase"/>
</dbReference>
<dbReference type="InterPro" id="IPR018321">
    <property type="entry name" value="Glucosamine6P_isomerase_CS"/>
</dbReference>
<dbReference type="InterPro" id="IPR037171">
    <property type="entry name" value="NagB/RpiA_transferase-like"/>
</dbReference>
<dbReference type="NCBIfam" id="TIGR00502">
    <property type="entry name" value="nagB"/>
    <property type="match status" value="1"/>
</dbReference>
<dbReference type="PANTHER" id="PTHR11280">
    <property type="entry name" value="GLUCOSAMINE-6-PHOSPHATE ISOMERASE"/>
    <property type="match status" value="1"/>
</dbReference>
<dbReference type="PANTHER" id="PTHR11280:SF5">
    <property type="entry name" value="GLUCOSAMINE-6-PHOSPHATE ISOMERASE"/>
    <property type="match status" value="1"/>
</dbReference>
<dbReference type="Pfam" id="PF01182">
    <property type="entry name" value="Glucosamine_iso"/>
    <property type="match status" value="1"/>
</dbReference>
<dbReference type="SUPFAM" id="SSF100950">
    <property type="entry name" value="NagB/RpiA/CoA transferase-like"/>
    <property type="match status" value="1"/>
</dbReference>
<dbReference type="PROSITE" id="PS01161">
    <property type="entry name" value="GLC_GALNAC_ISOMERASE"/>
    <property type="match status" value="1"/>
</dbReference>
<accession>P65513</accession>
<accession>Q99W40</accession>